<reference key="1">
    <citation type="journal article" date="2008" name="Proc. Natl. Acad. Sci. U.S.A.">
        <title>Nitrogen fixation island and rhizosphere competence traits in the genome of root-associated Pseudomonas stutzeri A1501.</title>
        <authorList>
            <person name="Yan Y."/>
            <person name="Yang J."/>
            <person name="Dou Y."/>
            <person name="Chen M."/>
            <person name="Ping S."/>
            <person name="Peng J."/>
            <person name="Lu W."/>
            <person name="Zhang W."/>
            <person name="Yao Z."/>
            <person name="Li H."/>
            <person name="Liu W."/>
            <person name="He S."/>
            <person name="Geng L."/>
            <person name="Zhang X."/>
            <person name="Yang F."/>
            <person name="Yu H."/>
            <person name="Zhan Y."/>
            <person name="Li D."/>
            <person name="Lin Z."/>
            <person name="Wang Y."/>
            <person name="Elmerich C."/>
            <person name="Lin M."/>
            <person name="Jin Q."/>
        </authorList>
    </citation>
    <scope>NUCLEOTIDE SEQUENCE [LARGE SCALE GENOMIC DNA]</scope>
    <source>
        <strain>A1501</strain>
    </source>
</reference>
<accession>A4VGW8</accession>
<organism>
    <name type="scientific">Stutzerimonas stutzeri (strain A1501)</name>
    <name type="common">Pseudomonas stutzeri</name>
    <dbReference type="NCBI Taxonomy" id="379731"/>
    <lineage>
        <taxon>Bacteria</taxon>
        <taxon>Pseudomonadati</taxon>
        <taxon>Pseudomonadota</taxon>
        <taxon>Gammaproteobacteria</taxon>
        <taxon>Pseudomonadales</taxon>
        <taxon>Pseudomonadaceae</taxon>
        <taxon>Stutzerimonas</taxon>
    </lineage>
</organism>
<comment type="function">
    <text evidence="1">Involved in iron-sulfur (Fe-S) cluster assembly. May act as a regulator of Fe-S biogenesis.</text>
</comment>
<comment type="similarity">
    <text evidence="1">Belongs to the frataxin family.</text>
</comment>
<proteinExistence type="inferred from homology"/>
<sequence>MSLSEARYHDLVDAVQESVEDVFDDTSLDVDLENSGGVLTVRFDNGSQLILSRQPALRQLWVAARSGGFHFDYDEGSQLWLCDASGERLGELLTRVTQEQGGEALEFEDL</sequence>
<protein>
    <recommendedName>
        <fullName evidence="1">Iron-sulfur cluster assembly protein CyaY</fullName>
    </recommendedName>
</protein>
<evidence type="ECO:0000255" key="1">
    <source>
        <dbReference type="HAMAP-Rule" id="MF_00142"/>
    </source>
</evidence>
<dbReference type="EMBL" id="CP000304">
    <property type="protein sequence ID" value="ABP78219.1"/>
    <property type="molecule type" value="Genomic_DNA"/>
</dbReference>
<dbReference type="RefSeq" id="WP_011911746.1">
    <property type="nucleotide sequence ID" value="NC_009434.1"/>
</dbReference>
<dbReference type="SMR" id="A4VGW8"/>
<dbReference type="GeneID" id="66819773"/>
<dbReference type="KEGG" id="psa:PST_0513"/>
<dbReference type="eggNOG" id="COG1965">
    <property type="taxonomic scope" value="Bacteria"/>
</dbReference>
<dbReference type="HOGENOM" id="CLU_080880_3_0_6"/>
<dbReference type="Proteomes" id="UP000000233">
    <property type="component" value="Chromosome"/>
</dbReference>
<dbReference type="GO" id="GO:0005829">
    <property type="term" value="C:cytosol"/>
    <property type="evidence" value="ECO:0007669"/>
    <property type="project" value="TreeGrafter"/>
</dbReference>
<dbReference type="GO" id="GO:0008199">
    <property type="term" value="F:ferric iron binding"/>
    <property type="evidence" value="ECO:0007669"/>
    <property type="project" value="InterPro"/>
</dbReference>
<dbReference type="GO" id="GO:0008198">
    <property type="term" value="F:ferrous iron binding"/>
    <property type="evidence" value="ECO:0007669"/>
    <property type="project" value="TreeGrafter"/>
</dbReference>
<dbReference type="GO" id="GO:0016226">
    <property type="term" value="P:iron-sulfur cluster assembly"/>
    <property type="evidence" value="ECO:0007669"/>
    <property type="project" value="UniProtKB-UniRule"/>
</dbReference>
<dbReference type="CDD" id="cd00503">
    <property type="entry name" value="Frataxin"/>
    <property type="match status" value="1"/>
</dbReference>
<dbReference type="Gene3D" id="3.30.920.10">
    <property type="entry name" value="Frataxin/CyaY"/>
    <property type="match status" value="1"/>
</dbReference>
<dbReference type="HAMAP" id="MF_00142">
    <property type="entry name" value="CyaY"/>
    <property type="match status" value="1"/>
</dbReference>
<dbReference type="InterPro" id="IPR047584">
    <property type="entry name" value="CyaY"/>
</dbReference>
<dbReference type="InterPro" id="IPR002908">
    <property type="entry name" value="Frataxin/CyaY"/>
</dbReference>
<dbReference type="InterPro" id="IPR036524">
    <property type="entry name" value="Frataxin/CyaY_sf"/>
</dbReference>
<dbReference type="InterPro" id="IPR020895">
    <property type="entry name" value="Frataxin_CS"/>
</dbReference>
<dbReference type="NCBIfam" id="TIGR03421">
    <property type="entry name" value="FeS_CyaY"/>
    <property type="match status" value="1"/>
</dbReference>
<dbReference type="PANTHER" id="PTHR16821">
    <property type="entry name" value="FRATAXIN"/>
    <property type="match status" value="1"/>
</dbReference>
<dbReference type="PANTHER" id="PTHR16821:SF2">
    <property type="entry name" value="FRATAXIN, MITOCHONDRIAL"/>
    <property type="match status" value="1"/>
</dbReference>
<dbReference type="Pfam" id="PF01491">
    <property type="entry name" value="Frataxin_Cyay"/>
    <property type="match status" value="1"/>
</dbReference>
<dbReference type="SMART" id="SM01219">
    <property type="entry name" value="Frataxin_Cyay"/>
    <property type="match status" value="1"/>
</dbReference>
<dbReference type="SUPFAM" id="SSF55387">
    <property type="entry name" value="Frataxin/Nqo15-like"/>
    <property type="match status" value="1"/>
</dbReference>
<dbReference type="PROSITE" id="PS01344">
    <property type="entry name" value="FRATAXIN_1"/>
    <property type="match status" value="1"/>
</dbReference>
<dbReference type="PROSITE" id="PS50810">
    <property type="entry name" value="FRATAXIN_2"/>
    <property type="match status" value="1"/>
</dbReference>
<feature type="chain" id="PRO_1000010945" description="Iron-sulfur cluster assembly protein CyaY">
    <location>
        <begin position="1"/>
        <end position="110"/>
    </location>
</feature>
<keyword id="KW-0408">Iron</keyword>
<keyword id="KW-0479">Metal-binding</keyword>
<keyword id="KW-1185">Reference proteome</keyword>
<gene>
    <name evidence="1" type="primary">cyaY</name>
    <name type="ordered locus">PST_0513</name>
</gene>
<name>CYAY_STUS1</name>